<gene>
    <name evidence="1" type="primary">rpsO</name>
    <name type="ordered locus">Smed_3445</name>
</gene>
<name>RS15_SINMW</name>
<evidence type="ECO:0000255" key="1">
    <source>
        <dbReference type="HAMAP-Rule" id="MF_01343"/>
    </source>
</evidence>
<evidence type="ECO:0000305" key="2"/>
<sequence>MSVTAERKAQIIKEFATAEGDTGSPEVQVAILTERINNLTEHFKDHKKDNHSRRGLLALVSSRRSLLDYLKKKDEARYTKLIGALGIRR</sequence>
<reference key="1">
    <citation type="submission" date="2007-06" db="EMBL/GenBank/DDBJ databases">
        <title>Complete sequence of Sinorhizobium medicae WSM419 chromosome.</title>
        <authorList>
            <consortium name="US DOE Joint Genome Institute"/>
            <person name="Copeland A."/>
            <person name="Lucas S."/>
            <person name="Lapidus A."/>
            <person name="Barry K."/>
            <person name="Glavina del Rio T."/>
            <person name="Dalin E."/>
            <person name="Tice H."/>
            <person name="Pitluck S."/>
            <person name="Chain P."/>
            <person name="Malfatti S."/>
            <person name="Shin M."/>
            <person name="Vergez L."/>
            <person name="Schmutz J."/>
            <person name="Larimer F."/>
            <person name="Land M."/>
            <person name="Hauser L."/>
            <person name="Kyrpides N."/>
            <person name="Mikhailova N."/>
            <person name="Reeve W.G."/>
            <person name="Richardson P."/>
        </authorList>
    </citation>
    <scope>NUCLEOTIDE SEQUENCE [LARGE SCALE GENOMIC DNA]</scope>
    <source>
        <strain>WSM419</strain>
    </source>
</reference>
<organism>
    <name type="scientific">Sinorhizobium medicae (strain WSM419)</name>
    <name type="common">Ensifer medicae</name>
    <dbReference type="NCBI Taxonomy" id="366394"/>
    <lineage>
        <taxon>Bacteria</taxon>
        <taxon>Pseudomonadati</taxon>
        <taxon>Pseudomonadota</taxon>
        <taxon>Alphaproteobacteria</taxon>
        <taxon>Hyphomicrobiales</taxon>
        <taxon>Rhizobiaceae</taxon>
        <taxon>Sinorhizobium/Ensifer group</taxon>
        <taxon>Sinorhizobium</taxon>
    </lineage>
</organism>
<keyword id="KW-0687">Ribonucleoprotein</keyword>
<keyword id="KW-0689">Ribosomal protein</keyword>
<keyword id="KW-0694">RNA-binding</keyword>
<keyword id="KW-0699">rRNA-binding</keyword>
<proteinExistence type="inferred from homology"/>
<comment type="function">
    <text evidence="1">One of the primary rRNA binding proteins, it binds directly to 16S rRNA where it helps nucleate assembly of the platform of the 30S subunit by binding and bridging several RNA helices of the 16S rRNA.</text>
</comment>
<comment type="function">
    <text evidence="1">Forms an intersubunit bridge (bridge B4) with the 23S rRNA of the 50S subunit in the ribosome.</text>
</comment>
<comment type="subunit">
    <text evidence="1">Part of the 30S ribosomal subunit. Forms a bridge to the 50S subunit in the 70S ribosome, contacting the 23S rRNA.</text>
</comment>
<comment type="similarity">
    <text evidence="1">Belongs to the universal ribosomal protein uS15 family.</text>
</comment>
<feature type="chain" id="PRO_1000054876" description="Small ribosomal subunit protein uS15">
    <location>
        <begin position="1"/>
        <end position="89"/>
    </location>
</feature>
<dbReference type="EMBL" id="CP000738">
    <property type="protein sequence ID" value="ABR62263.1"/>
    <property type="molecule type" value="Genomic_DNA"/>
</dbReference>
<dbReference type="RefSeq" id="WP_012067643.1">
    <property type="nucleotide sequence ID" value="NC_009636.1"/>
</dbReference>
<dbReference type="RefSeq" id="YP_001329098.1">
    <property type="nucleotide sequence ID" value="NC_009636.1"/>
</dbReference>
<dbReference type="SMR" id="A6UF33"/>
<dbReference type="STRING" id="366394.Smed_3445"/>
<dbReference type="GeneID" id="61610996"/>
<dbReference type="KEGG" id="smd:Smed_3445"/>
<dbReference type="PATRIC" id="fig|366394.8.peg.6695"/>
<dbReference type="eggNOG" id="COG0184">
    <property type="taxonomic scope" value="Bacteria"/>
</dbReference>
<dbReference type="HOGENOM" id="CLU_148518_0_0_5"/>
<dbReference type="OrthoDB" id="9799262at2"/>
<dbReference type="Proteomes" id="UP000001108">
    <property type="component" value="Chromosome"/>
</dbReference>
<dbReference type="GO" id="GO:0022627">
    <property type="term" value="C:cytosolic small ribosomal subunit"/>
    <property type="evidence" value="ECO:0007669"/>
    <property type="project" value="TreeGrafter"/>
</dbReference>
<dbReference type="GO" id="GO:0019843">
    <property type="term" value="F:rRNA binding"/>
    <property type="evidence" value="ECO:0007669"/>
    <property type="project" value="UniProtKB-UniRule"/>
</dbReference>
<dbReference type="GO" id="GO:0003735">
    <property type="term" value="F:structural constituent of ribosome"/>
    <property type="evidence" value="ECO:0007669"/>
    <property type="project" value="InterPro"/>
</dbReference>
<dbReference type="GO" id="GO:0006412">
    <property type="term" value="P:translation"/>
    <property type="evidence" value="ECO:0007669"/>
    <property type="project" value="UniProtKB-UniRule"/>
</dbReference>
<dbReference type="CDD" id="cd00353">
    <property type="entry name" value="Ribosomal_S15p_S13e"/>
    <property type="match status" value="1"/>
</dbReference>
<dbReference type="FunFam" id="1.10.287.10:FF:000002">
    <property type="entry name" value="30S ribosomal protein S15"/>
    <property type="match status" value="1"/>
</dbReference>
<dbReference type="Gene3D" id="6.10.250.3130">
    <property type="match status" value="1"/>
</dbReference>
<dbReference type="Gene3D" id="1.10.287.10">
    <property type="entry name" value="S15/NS1, RNA-binding"/>
    <property type="match status" value="1"/>
</dbReference>
<dbReference type="HAMAP" id="MF_01343_B">
    <property type="entry name" value="Ribosomal_uS15_B"/>
    <property type="match status" value="1"/>
</dbReference>
<dbReference type="InterPro" id="IPR000589">
    <property type="entry name" value="Ribosomal_uS15"/>
</dbReference>
<dbReference type="InterPro" id="IPR005290">
    <property type="entry name" value="Ribosomal_uS15_bac-type"/>
</dbReference>
<dbReference type="InterPro" id="IPR009068">
    <property type="entry name" value="uS15_NS1_RNA-bd_sf"/>
</dbReference>
<dbReference type="NCBIfam" id="TIGR00952">
    <property type="entry name" value="S15_bact"/>
    <property type="match status" value="1"/>
</dbReference>
<dbReference type="PANTHER" id="PTHR23321">
    <property type="entry name" value="RIBOSOMAL PROTEIN S15, BACTERIAL AND ORGANELLAR"/>
    <property type="match status" value="1"/>
</dbReference>
<dbReference type="PANTHER" id="PTHR23321:SF26">
    <property type="entry name" value="SMALL RIBOSOMAL SUBUNIT PROTEIN US15M"/>
    <property type="match status" value="1"/>
</dbReference>
<dbReference type="Pfam" id="PF00312">
    <property type="entry name" value="Ribosomal_S15"/>
    <property type="match status" value="1"/>
</dbReference>
<dbReference type="SMART" id="SM01387">
    <property type="entry name" value="Ribosomal_S15"/>
    <property type="match status" value="1"/>
</dbReference>
<dbReference type="SUPFAM" id="SSF47060">
    <property type="entry name" value="S15/NS1 RNA-binding domain"/>
    <property type="match status" value="1"/>
</dbReference>
<dbReference type="PROSITE" id="PS00362">
    <property type="entry name" value="RIBOSOMAL_S15"/>
    <property type="match status" value="1"/>
</dbReference>
<protein>
    <recommendedName>
        <fullName evidence="1">Small ribosomal subunit protein uS15</fullName>
    </recommendedName>
    <alternativeName>
        <fullName evidence="2">30S ribosomal protein S15</fullName>
    </alternativeName>
</protein>
<accession>A6UF33</accession>